<gene>
    <name type="primary">bexD</name>
</gene>
<accession>P22236</accession>
<feature type="signal peptide" evidence="2">
    <location>
        <begin position="1"/>
        <end position="19"/>
    </location>
</feature>
<feature type="chain" id="PRO_0000025216" description="Capsule polysaccharide export protein BexD">
    <location>
        <begin position="20"/>
        <end position="394"/>
    </location>
</feature>
<feature type="lipid moiety-binding region" description="N-palmitoyl cysteine" evidence="2">
    <location>
        <position position="20"/>
    </location>
</feature>
<feature type="lipid moiety-binding region" description="S-diacylglycerol cysteine" evidence="2">
    <location>
        <position position="20"/>
    </location>
</feature>
<proteinExistence type="inferred from homology"/>
<name>BEXD_HAEIF</name>
<keyword id="KW-0972">Capsule biogenesis/degradation</keyword>
<keyword id="KW-0998">Cell outer membrane</keyword>
<keyword id="KW-0406">Ion transport</keyword>
<keyword id="KW-0449">Lipoprotein</keyword>
<keyword id="KW-0472">Membrane</keyword>
<keyword id="KW-0564">Palmitate</keyword>
<keyword id="KW-0625">Polysaccharide transport</keyword>
<keyword id="KW-0626">Porin</keyword>
<keyword id="KW-0732">Signal</keyword>
<keyword id="KW-0762">Sugar transport</keyword>
<keyword id="KW-0812">Transmembrane</keyword>
<keyword id="KW-1134">Transmembrane beta strand</keyword>
<keyword id="KW-0813">Transport</keyword>
<reference key="1">
    <citation type="journal article" date="1990" name="Mol. Microbiol.">
        <title>The bex locus in encapsulated Haemophilus influenzae: a chromosomal region involved in capsule polysaccharide export.</title>
        <authorList>
            <person name="Kroll J.S."/>
            <person name="Loynds B."/>
            <person name="Brophy L.N."/>
            <person name="Moxon E.R."/>
        </authorList>
    </citation>
    <scope>NUCLEOTIDE SEQUENCE [GENOMIC DNA]</scope>
    <source>
        <strain>Eagan / Serotype B</strain>
    </source>
</reference>
<sequence length="394" mass="41974">MRNYPLKAVCAVLMLGLSACSSLPTSGPTDSAVLEINQGADASELAAKVNVIELNESLVQQIYAAQQSQRFSGFADVRGNGGYAGAVNVGDVLEISIWEAPPAVLFGTTFSSEGQGSGHVTQLPSQIVNKNGTVTVPFVGNISVAGKTPEAIQAQIVASLSRKANQPQAVVKIANNNSSDVTVIRQGSAVRMPLTANDERVLDAVAAIGGSTGNIEDVTVQLTRGNQVKTLAFETLIADPKQNIVLRAGDVVSLLNTPYKFTGLGAVGNNQQLRFSSSGITLAEAIGKMGGLIDTRSDPRGVFVFRYMPFAQLDSKAQQEWAAKGYGNGMEVPTVYHANLLQPETMFLLQRFPIQDKDIVYVSNAPLSEFQKFLRIIFSITSPVTSTTNTIRSY</sequence>
<evidence type="ECO:0000250" key="1"/>
<evidence type="ECO:0000255" key="2">
    <source>
        <dbReference type="PROSITE-ProRule" id="PRU00303"/>
    </source>
</evidence>
<evidence type="ECO:0000305" key="3"/>
<comment type="function">
    <text>May form an ATP-driven capsule polysaccharide export apparatus, in association with the BexA, BexB and BexC proteins. May function as a membrane anchor for capsular polysaccharides. Possible porin properties.</text>
</comment>
<comment type="subcellular location">
    <subcellularLocation>
        <location evidence="1">Cell outer membrane</location>
        <topology evidence="1">Multi-pass membrane protein</topology>
    </subcellularLocation>
</comment>
<comment type="similarity">
    <text evidence="3">Belongs to the BexD/CtrA/VexA family.</text>
</comment>
<organism>
    <name type="scientific">Haemophilus influenzae</name>
    <dbReference type="NCBI Taxonomy" id="727"/>
    <lineage>
        <taxon>Bacteria</taxon>
        <taxon>Pseudomonadati</taxon>
        <taxon>Pseudomonadota</taxon>
        <taxon>Gammaproteobacteria</taxon>
        <taxon>Pasteurellales</taxon>
        <taxon>Pasteurellaceae</taxon>
        <taxon>Haemophilus</taxon>
    </lineage>
</organism>
<protein>
    <recommendedName>
        <fullName>Capsule polysaccharide export protein BexD</fullName>
    </recommendedName>
</protein>
<dbReference type="EMBL" id="X54987">
    <property type="protein sequence ID" value="CAA38730.1"/>
    <property type="molecule type" value="Genomic_DNA"/>
</dbReference>
<dbReference type="PIR" id="S12232">
    <property type="entry name" value="BWHIXD"/>
</dbReference>
<dbReference type="SMR" id="P22236"/>
<dbReference type="TCDB" id="1.B.18.2.4">
    <property type="family name" value="the outer membrane auxiliary (oma) protein family"/>
</dbReference>
<dbReference type="GO" id="GO:0009279">
    <property type="term" value="C:cell outer membrane"/>
    <property type="evidence" value="ECO:0007669"/>
    <property type="project" value="UniProtKB-SubCell"/>
</dbReference>
<dbReference type="GO" id="GO:0046930">
    <property type="term" value="C:pore complex"/>
    <property type="evidence" value="ECO:0007669"/>
    <property type="project" value="UniProtKB-KW"/>
</dbReference>
<dbReference type="GO" id="GO:0015159">
    <property type="term" value="F:polysaccharide transmembrane transporter activity"/>
    <property type="evidence" value="ECO:0007669"/>
    <property type="project" value="InterPro"/>
</dbReference>
<dbReference type="GO" id="GO:0015288">
    <property type="term" value="F:porin activity"/>
    <property type="evidence" value="ECO:0007669"/>
    <property type="project" value="UniProtKB-KW"/>
</dbReference>
<dbReference type="GO" id="GO:0006811">
    <property type="term" value="P:monoatomic ion transport"/>
    <property type="evidence" value="ECO:0007669"/>
    <property type="project" value="UniProtKB-KW"/>
</dbReference>
<dbReference type="Gene3D" id="3.10.560.10">
    <property type="entry name" value="Outer membrane lipoprotein wza domain like"/>
    <property type="match status" value="2"/>
</dbReference>
<dbReference type="Gene3D" id="3.30.1950.10">
    <property type="entry name" value="wza like domain"/>
    <property type="match status" value="1"/>
</dbReference>
<dbReference type="InterPro" id="IPR049712">
    <property type="entry name" value="Poly_export"/>
</dbReference>
<dbReference type="InterPro" id="IPR003715">
    <property type="entry name" value="Poly_export_N"/>
</dbReference>
<dbReference type="InterPro" id="IPR054765">
    <property type="entry name" value="SLBB_dom"/>
</dbReference>
<dbReference type="PANTHER" id="PTHR33619">
    <property type="entry name" value="POLYSACCHARIDE EXPORT PROTEIN GFCE-RELATED"/>
    <property type="match status" value="1"/>
</dbReference>
<dbReference type="PANTHER" id="PTHR33619:SF3">
    <property type="entry name" value="POLYSACCHARIDE EXPORT PROTEIN GFCE-RELATED"/>
    <property type="match status" value="1"/>
</dbReference>
<dbReference type="Pfam" id="PF02563">
    <property type="entry name" value="Poly_export"/>
    <property type="match status" value="1"/>
</dbReference>
<dbReference type="Pfam" id="PF22461">
    <property type="entry name" value="SLBB_2"/>
    <property type="match status" value="1"/>
</dbReference>
<dbReference type="PROSITE" id="PS51257">
    <property type="entry name" value="PROKAR_LIPOPROTEIN"/>
    <property type="match status" value="1"/>
</dbReference>